<gene>
    <name type="ordered locus">MIMI_L479</name>
</gene>
<sequence length="251" mass="28817">MTDFTNSEKATNYQAVGEFNRTFGHPANTVFQHKIFDENPQTVKLRLDLIKEEVGELVDAVNENNLKEILDACGDILYVVYGMGQVFGINLDHKGPLESIEKPGYPKFSRNYSVNKNVFTESYQDVKKLVDKISDTYNCLDLSVAEKNIGDVSYHLYTILTFVYELSDLVGFDLDEVFDRVHRSNMSKLCLNEQEAVETIEHYKTLPGFESVIVKYRLAVDNKRYVIYNAESGKILKSKYFKLPNFSDLLE</sequence>
<protein>
    <recommendedName>
        <fullName>Uncharacterized protein L479</fullName>
    </recommendedName>
</protein>
<proteinExistence type="predicted"/>
<organism>
    <name type="scientific">Acanthamoeba polyphaga mimivirus</name>
    <name type="common">APMV</name>
    <dbReference type="NCBI Taxonomy" id="212035"/>
    <lineage>
        <taxon>Viruses</taxon>
        <taxon>Varidnaviria</taxon>
        <taxon>Bamfordvirae</taxon>
        <taxon>Nucleocytoviricota</taxon>
        <taxon>Megaviricetes</taxon>
        <taxon>Imitervirales</taxon>
        <taxon>Mimiviridae</taxon>
        <taxon>Megamimivirinae</taxon>
        <taxon>Mimivirus</taxon>
        <taxon>Mimivirus bradfordmassiliense</taxon>
    </lineage>
</organism>
<organismHost>
    <name type="scientific">Acanthamoeba polyphaga</name>
    <name type="common">Amoeba</name>
    <dbReference type="NCBI Taxonomy" id="5757"/>
</organismHost>
<feature type="chain" id="PRO_0000244000" description="Uncharacterized protein L479">
    <location>
        <begin position="1"/>
        <end position="251"/>
    </location>
</feature>
<keyword id="KW-1185">Reference proteome</keyword>
<accession>Q5UQE7</accession>
<name>YL479_MIMIV</name>
<dbReference type="EMBL" id="AY653733">
    <property type="protein sequence ID" value="AAV50745.1"/>
    <property type="molecule type" value="Genomic_DNA"/>
</dbReference>
<dbReference type="KEGG" id="vg:9925105"/>
<dbReference type="OrthoDB" id="19669at10239"/>
<dbReference type="Proteomes" id="UP000001134">
    <property type="component" value="Genome"/>
</dbReference>
<dbReference type="CDD" id="cd11530">
    <property type="entry name" value="NTP-PPase_DR2231_like"/>
    <property type="match status" value="1"/>
</dbReference>
<dbReference type="Gene3D" id="1.10.3420.10">
    <property type="entry name" value="putative ntp pyrophosphohydrolase like domain"/>
    <property type="match status" value="2"/>
</dbReference>
<dbReference type="InterPro" id="IPR033653">
    <property type="entry name" value="NTP-PPase_DR2231-like"/>
</dbReference>
<dbReference type="InterPro" id="IPR023292">
    <property type="entry name" value="NTP_PyroPHydrolase-like_dom_sf"/>
</dbReference>
<dbReference type="InterPro" id="IPR021130">
    <property type="entry name" value="PRib-ATP_PPHydrolase-like"/>
</dbReference>
<dbReference type="Pfam" id="PF01503">
    <property type="entry name" value="PRA-PH"/>
    <property type="match status" value="1"/>
</dbReference>
<dbReference type="SUPFAM" id="SSF101386">
    <property type="entry name" value="all-alpha NTP pyrophosphatases"/>
    <property type="match status" value="1"/>
</dbReference>
<reference key="1">
    <citation type="journal article" date="2004" name="Science">
        <title>The 1.2-megabase genome sequence of Mimivirus.</title>
        <authorList>
            <person name="Raoult D."/>
            <person name="Audic S."/>
            <person name="Robert C."/>
            <person name="Abergel C."/>
            <person name="Renesto P."/>
            <person name="Ogata H."/>
            <person name="La Scola B."/>
            <person name="Susan M."/>
            <person name="Claverie J.-M."/>
        </authorList>
    </citation>
    <scope>NUCLEOTIDE SEQUENCE [LARGE SCALE GENOMIC DNA]</scope>
    <source>
        <strain>Rowbotham-Bradford</strain>
    </source>
</reference>